<sequence>MSSSFGKIFRVSTFGESHGGAVGVILDGCPPKLKVDINLIQNELDRRRPGQSDITTPRNEEDKIEILSGIKEGFTLGTPIAMLVRNKDQRPGDYDNLEQVFRPSHADGTYHLKYGIQASSGGGRASARETIGRVAAGAVAKQLLKTFCNTEILSWVKRIHDIESDINKEKISLKQIDSNIVRCPDEKVSTEMIERIKELKRQGDSCGGVIECLVRNVPSGLGMPVFDKLEADLAKALMSLPATKGFEIGSGFSGTYLKGSEHNDAFIKSDDISKLRTTSNNSGGIQGGISNGENIEMKIAFKPTATIGKEQKTVNAEGKEVLMKAKGRHDPCVLPRAVPMVDAMVALVLADHLLLNHAQCDLINK</sequence>
<reference key="1">
    <citation type="journal article" date="2007" name="PLoS Genet.">
        <title>Patterns and implications of gene gain and loss in the evolution of Prochlorococcus.</title>
        <authorList>
            <person name="Kettler G.C."/>
            <person name="Martiny A.C."/>
            <person name="Huang K."/>
            <person name="Zucker J."/>
            <person name="Coleman M.L."/>
            <person name="Rodrigue S."/>
            <person name="Chen F."/>
            <person name="Lapidus A."/>
            <person name="Ferriera S."/>
            <person name="Johnson J."/>
            <person name="Steglich C."/>
            <person name="Church G.M."/>
            <person name="Richardson P."/>
            <person name="Chisholm S.W."/>
        </authorList>
    </citation>
    <scope>NUCLEOTIDE SEQUENCE [LARGE SCALE GENOMIC DNA]</scope>
    <source>
        <strain>AS9601</strain>
    </source>
</reference>
<evidence type="ECO:0000255" key="1">
    <source>
        <dbReference type="HAMAP-Rule" id="MF_00300"/>
    </source>
</evidence>
<protein>
    <recommendedName>
        <fullName evidence="1">Chorismate synthase</fullName>
        <shortName evidence="1">CS</shortName>
        <ecNumber evidence="1">4.2.3.5</ecNumber>
    </recommendedName>
    <alternativeName>
        <fullName evidence="1">5-enolpyruvylshikimate-3-phosphate phospholyase</fullName>
    </alternativeName>
</protein>
<keyword id="KW-0028">Amino-acid biosynthesis</keyword>
<keyword id="KW-0057">Aromatic amino acid biosynthesis</keyword>
<keyword id="KW-0274">FAD</keyword>
<keyword id="KW-0285">Flavoprotein</keyword>
<keyword id="KW-0288">FMN</keyword>
<keyword id="KW-0456">Lyase</keyword>
<keyword id="KW-0521">NADP</keyword>
<accession>A2BP22</accession>
<gene>
    <name evidence="1" type="primary">aroC</name>
    <name type="ordered locus">A9601_02451</name>
</gene>
<feature type="chain" id="PRO_1000022525" description="Chorismate synthase">
    <location>
        <begin position="1"/>
        <end position="365"/>
    </location>
</feature>
<feature type="binding site" evidence="1">
    <location>
        <position position="47"/>
    </location>
    <ligand>
        <name>NADP(+)</name>
        <dbReference type="ChEBI" id="CHEBI:58349"/>
    </ligand>
</feature>
<feature type="binding site" evidence="1">
    <location>
        <begin position="124"/>
        <end position="126"/>
    </location>
    <ligand>
        <name>FMN</name>
        <dbReference type="ChEBI" id="CHEBI:58210"/>
    </ligand>
</feature>
<feature type="binding site" evidence="1">
    <location>
        <position position="287"/>
    </location>
    <ligand>
        <name>FMN</name>
        <dbReference type="ChEBI" id="CHEBI:58210"/>
    </ligand>
</feature>
<feature type="binding site" evidence="1">
    <location>
        <begin position="302"/>
        <end position="306"/>
    </location>
    <ligand>
        <name>FMN</name>
        <dbReference type="ChEBI" id="CHEBI:58210"/>
    </ligand>
</feature>
<feature type="binding site" evidence="1">
    <location>
        <position position="328"/>
    </location>
    <ligand>
        <name>FMN</name>
        <dbReference type="ChEBI" id="CHEBI:58210"/>
    </ligand>
</feature>
<organism>
    <name type="scientific">Prochlorococcus marinus (strain AS9601)</name>
    <dbReference type="NCBI Taxonomy" id="146891"/>
    <lineage>
        <taxon>Bacteria</taxon>
        <taxon>Bacillati</taxon>
        <taxon>Cyanobacteriota</taxon>
        <taxon>Cyanophyceae</taxon>
        <taxon>Synechococcales</taxon>
        <taxon>Prochlorococcaceae</taxon>
        <taxon>Prochlorococcus</taxon>
    </lineage>
</organism>
<comment type="function">
    <text evidence="1">Catalyzes the anti-1,4-elimination of the C-3 phosphate and the C-6 proR hydrogen from 5-enolpyruvylshikimate-3-phosphate (EPSP) to yield chorismate, which is the branch point compound that serves as the starting substrate for the three terminal pathways of aromatic amino acid biosynthesis. This reaction introduces a second double bond into the aromatic ring system.</text>
</comment>
<comment type="catalytic activity">
    <reaction evidence="1">
        <text>5-O-(1-carboxyvinyl)-3-phosphoshikimate = chorismate + phosphate</text>
        <dbReference type="Rhea" id="RHEA:21020"/>
        <dbReference type="ChEBI" id="CHEBI:29748"/>
        <dbReference type="ChEBI" id="CHEBI:43474"/>
        <dbReference type="ChEBI" id="CHEBI:57701"/>
        <dbReference type="EC" id="4.2.3.5"/>
    </reaction>
</comment>
<comment type="cofactor">
    <cofactor evidence="1">
        <name>FMNH2</name>
        <dbReference type="ChEBI" id="CHEBI:57618"/>
    </cofactor>
    <text evidence="1">Reduced FMN (FMNH(2)).</text>
</comment>
<comment type="pathway">
    <text evidence="1">Metabolic intermediate biosynthesis; chorismate biosynthesis; chorismate from D-erythrose 4-phosphate and phosphoenolpyruvate: step 7/7.</text>
</comment>
<comment type="subunit">
    <text evidence="1">Homotetramer.</text>
</comment>
<comment type="similarity">
    <text evidence="1">Belongs to the chorismate synthase family.</text>
</comment>
<proteinExistence type="inferred from homology"/>
<dbReference type="EC" id="4.2.3.5" evidence="1"/>
<dbReference type="EMBL" id="CP000551">
    <property type="protein sequence ID" value="ABM69533.1"/>
    <property type="molecule type" value="Genomic_DNA"/>
</dbReference>
<dbReference type="RefSeq" id="WP_011817717.1">
    <property type="nucleotide sequence ID" value="NC_008816.1"/>
</dbReference>
<dbReference type="SMR" id="A2BP22"/>
<dbReference type="STRING" id="146891.A9601_02451"/>
<dbReference type="KEGG" id="pmb:A9601_02451"/>
<dbReference type="eggNOG" id="COG0082">
    <property type="taxonomic scope" value="Bacteria"/>
</dbReference>
<dbReference type="HOGENOM" id="CLU_034547_0_1_3"/>
<dbReference type="OrthoDB" id="9771806at2"/>
<dbReference type="UniPathway" id="UPA00053">
    <property type="reaction ID" value="UER00090"/>
</dbReference>
<dbReference type="Proteomes" id="UP000002590">
    <property type="component" value="Chromosome"/>
</dbReference>
<dbReference type="GO" id="GO:0005829">
    <property type="term" value="C:cytosol"/>
    <property type="evidence" value="ECO:0007669"/>
    <property type="project" value="TreeGrafter"/>
</dbReference>
<dbReference type="GO" id="GO:0004107">
    <property type="term" value="F:chorismate synthase activity"/>
    <property type="evidence" value="ECO:0007669"/>
    <property type="project" value="UniProtKB-UniRule"/>
</dbReference>
<dbReference type="GO" id="GO:0010181">
    <property type="term" value="F:FMN binding"/>
    <property type="evidence" value="ECO:0007669"/>
    <property type="project" value="TreeGrafter"/>
</dbReference>
<dbReference type="GO" id="GO:0008652">
    <property type="term" value="P:amino acid biosynthetic process"/>
    <property type="evidence" value="ECO:0007669"/>
    <property type="project" value="UniProtKB-KW"/>
</dbReference>
<dbReference type="GO" id="GO:0009073">
    <property type="term" value="P:aromatic amino acid family biosynthetic process"/>
    <property type="evidence" value="ECO:0007669"/>
    <property type="project" value="UniProtKB-KW"/>
</dbReference>
<dbReference type="GO" id="GO:0009423">
    <property type="term" value="P:chorismate biosynthetic process"/>
    <property type="evidence" value="ECO:0007669"/>
    <property type="project" value="UniProtKB-UniRule"/>
</dbReference>
<dbReference type="CDD" id="cd07304">
    <property type="entry name" value="Chorismate_synthase"/>
    <property type="match status" value="1"/>
</dbReference>
<dbReference type="FunFam" id="3.60.150.10:FF:000003">
    <property type="entry name" value="Chorismate synthase"/>
    <property type="match status" value="1"/>
</dbReference>
<dbReference type="Gene3D" id="3.60.150.10">
    <property type="entry name" value="Chorismate synthase AroC"/>
    <property type="match status" value="1"/>
</dbReference>
<dbReference type="HAMAP" id="MF_00300">
    <property type="entry name" value="Chorismate_synth"/>
    <property type="match status" value="1"/>
</dbReference>
<dbReference type="InterPro" id="IPR000453">
    <property type="entry name" value="Chorismate_synth"/>
</dbReference>
<dbReference type="InterPro" id="IPR035904">
    <property type="entry name" value="Chorismate_synth_AroC_sf"/>
</dbReference>
<dbReference type="InterPro" id="IPR020541">
    <property type="entry name" value="Chorismate_synthase_CS"/>
</dbReference>
<dbReference type="NCBIfam" id="TIGR00033">
    <property type="entry name" value="aroC"/>
    <property type="match status" value="1"/>
</dbReference>
<dbReference type="NCBIfam" id="NF003793">
    <property type="entry name" value="PRK05382.1"/>
    <property type="match status" value="1"/>
</dbReference>
<dbReference type="PANTHER" id="PTHR21085">
    <property type="entry name" value="CHORISMATE SYNTHASE"/>
    <property type="match status" value="1"/>
</dbReference>
<dbReference type="PANTHER" id="PTHR21085:SF0">
    <property type="entry name" value="CHORISMATE SYNTHASE"/>
    <property type="match status" value="1"/>
</dbReference>
<dbReference type="Pfam" id="PF01264">
    <property type="entry name" value="Chorismate_synt"/>
    <property type="match status" value="1"/>
</dbReference>
<dbReference type="PIRSF" id="PIRSF001456">
    <property type="entry name" value="Chorismate_synth"/>
    <property type="match status" value="1"/>
</dbReference>
<dbReference type="SUPFAM" id="SSF103263">
    <property type="entry name" value="Chorismate synthase, AroC"/>
    <property type="match status" value="1"/>
</dbReference>
<dbReference type="PROSITE" id="PS00787">
    <property type="entry name" value="CHORISMATE_SYNTHASE_1"/>
    <property type="match status" value="1"/>
</dbReference>
<dbReference type="PROSITE" id="PS00788">
    <property type="entry name" value="CHORISMATE_SYNTHASE_2"/>
    <property type="match status" value="1"/>
</dbReference>
<name>AROC_PROMS</name>